<proteinExistence type="evidence at protein level"/>
<reference key="1">
    <citation type="journal article" date="2001" name="J. Bacteriol.">
        <title>Genome of the bacterium Streptococcus pneumoniae strain R6.</title>
        <authorList>
            <person name="Hoskins J."/>
            <person name="Alborn W.E. Jr."/>
            <person name="Arnold J."/>
            <person name="Blaszczak L.C."/>
            <person name="Burgett S."/>
            <person name="DeHoff B.S."/>
            <person name="Estrem S.T."/>
            <person name="Fritz L."/>
            <person name="Fu D.-J."/>
            <person name="Fuller W."/>
            <person name="Geringer C."/>
            <person name="Gilmour R."/>
            <person name="Glass J.S."/>
            <person name="Khoja H."/>
            <person name="Kraft A.R."/>
            <person name="Lagace R.E."/>
            <person name="LeBlanc D.J."/>
            <person name="Lee L.N."/>
            <person name="Lefkowitz E.J."/>
            <person name="Lu J."/>
            <person name="Matsushima P."/>
            <person name="McAhren S.M."/>
            <person name="McHenney M."/>
            <person name="McLeaster K."/>
            <person name="Mundy C.W."/>
            <person name="Nicas T.I."/>
            <person name="Norris F.H."/>
            <person name="O'Gara M."/>
            <person name="Peery R.B."/>
            <person name="Robertson G.T."/>
            <person name="Rockey P."/>
            <person name="Sun P.-M."/>
            <person name="Winkler M.E."/>
            <person name="Yang Y."/>
            <person name="Young-Bellido M."/>
            <person name="Zhao G."/>
            <person name="Zook C.A."/>
            <person name="Baltz R.H."/>
            <person name="Jaskunas S.R."/>
            <person name="Rosteck P.R. Jr."/>
            <person name="Skatrud P.L."/>
            <person name="Glass J.I."/>
        </authorList>
    </citation>
    <scope>NUCLEOTIDE SEQUENCE [LARGE SCALE GENOMIC DNA]</scope>
    <source>
        <strain>ATCC BAA-255 / R6</strain>
    </source>
</reference>
<reference key="2">
    <citation type="journal article" date="2012" name="Mol. Microbiol.">
        <title>Mutational dissection of the S/T-kinase StkP reveals crucial roles in cell division of Streptococcus pneumoniae.</title>
        <authorList>
            <person name="Fleurie A."/>
            <person name="Cluzel C."/>
            <person name="Guiral S."/>
            <person name="Freton C."/>
            <person name="Galisson F."/>
            <person name="Zanella-Cleon I."/>
            <person name="Di Guilmi A.M."/>
            <person name="Grangeasse C."/>
        </authorList>
    </citation>
    <scope>FUNCTION IN CELL SHAPE AND DIVISION</scope>
    <scope>CATALYTIC ACTIVITY</scope>
    <scope>IDENTIFICATION OF DIVIVA AS SUBSTRATE</scope>
    <scope>AUTOPHOSPHORYLATION ACTIVITY</scope>
    <scope>DOMAIN</scope>
    <scope>SUBCELLULAR LOCATION</scope>
    <scope>DISRUPTION PHENOTYPE</scope>
    <scope>MUTAGENESIS OF LYS-42</scope>
    <source>
        <strain>R6 / R800</strain>
    </source>
</reference>
<reference key="3">
    <citation type="journal article" date="2012" name="Proc. Natl. Acad. Sci. U.S.A.">
        <title>Control of cell division in Streptococcus pneumoniae by the conserved Ser/Thr protein kinase StkP.</title>
        <authorList>
            <person name="Beilharz K."/>
            <person name="Novakova L."/>
            <person name="Fadda D."/>
            <person name="Branny P."/>
            <person name="Massidda O."/>
            <person name="Veening J.W."/>
        </authorList>
    </citation>
    <scope>FUNCTION</scope>
    <scope>SUBCELLULAR LOCATION</scope>
    <scope>DISRUPTION PHENOTYPE</scope>
    <scope>MUTAGENESIS OF LYS-42</scope>
    <source>
        <strain>ATCC BAA-255 / R6</strain>
    </source>
</reference>
<reference key="4">
    <citation type="journal article" date="2017" name="Microbiology">
        <title>Evidence that pneumococcal WalK is regulated by StkP through protein-protein interaction.</title>
        <authorList>
            <person name="Stamsaas G.A."/>
            <person name="Straume D."/>
            <person name="Salehian Z."/>
            <person name="Haavarstein L.S."/>
        </authorList>
    </citation>
    <scope>FUNCTION</scope>
    <scope>DISRUPTION PHENOTYPE</scope>
    <scope>MUTAGENESIS OF LYS-42</scope>
</reference>
<reference key="5">
    <citation type="journal article" date="2017" name="Mol. Microbiol.">
        <title>Identification of EloR (Spr1851) as a regulator of cell elongation in Streptococcus pneumoniae.</title>
        <authorList>
            <person name="Stamsaas G.A."/>
            <person name="Straume D."/>
            <person name="Ruud Winther A."/>
            <person name="Kjos M."/>
            <person name="Frantzen C.A."/>
            <person name="Haavarstein L.S."/>
        </authorList>
    </citation>
    <scope>FUNCTION</scope>
    <scope>SUBSTRATE SPECIFICITY</scope>
    <scope>SUBUNIT</scope>
    <scope>SUBCELLULAR LOCATION</scope>
    <scope>DOMAIN</scope>
    <scope>MUTAGENESIS OF LYS-42</scope>
    <source>
        <strain>R6 / R704</strain>
    </source>
</reference>
<dbReference type="EC" id="2.7.11.1"/>
<dbReference type="EMBL" id="AE007317">
    <property type="protein sequence ID" value="AAL00380.1"/>
    <property type="molecule type" value="Genomic_DNA"/>
</dbReference>
<dbReference type="PIR" id="G98068">
    <property type="entry name" value="G98068"/>
</dbReference>
<dbReference type="RefSeq" id="NP_359169.1">
    <property type="nucleotide sequence ID" value="NC_003098.1"/>
</dbReference>
<dbReference type="RefSeq" id="WP_000614552.1">
    <property type="nucleotide sequence ID" value="NC_003098.1"/>
</dbReference>
<dbReference type="PDB" id="5NOD">
    <property type="method" value="X-ray"/>
    <property type="resolution" value="1.90 A"/>
    <property type="chains" value="A=578-659"/>
</dbReference>
<dbReference type="PDBsum" id="5NOD"/>
<dbReference type="SMR" id="Q8DNS0"/>
<dbReference type="BioGRID" id="4180581">
    <property type="interactions" value="1"/>
</dbReference>
<dbReference type="DIP" id="DIP-61347N"/>
<dbReference type="IntAct" id="Q8DNS0">
    <property type="interactions" value="1"/>
</dbReference>
<dbReference type="STRING" id="171101.spr1577"/>
<dbReference type="KEGG" id="spr:spr1577"/>
<dbReference type="PATRIC" id="fig|171101.6.peg.1704"/>
<dbReference type="eggNOG" id="COG0515">
    <property type="taxonomic scope" value="Bacteria"/>
</dbReference>
<dbReference type="eggNOG" id="COG2815">
    <property type="taxonomic scope" value="Bacteria"/>
</dbReference>
<dbReference type="HOGENOM" id="CLU_000288_135_2_9"/>
<dbReference type="Proteomes" id="UP000000586">
    <property type="component" value="Chromosome"/>
</dbReference>
<dbReference type="GO" id="GO:0005886">
    <property type="term" value="C:plasma membrane"/>
    <property type="evidence" value="ECO:0007669"/>
    <property type="project" value="UniProtKB-SubCell"/>
</dbReference>
<dbReference type="GO" id="GO:0005524">
    <property type="term" value="F:ATP binding"/>
    <property type="evidence" value="ECO:0007669"/>
    <property type="project" value="UniProtKB-KW"/>
</dbReference>
<dbReference type="GO" id="GO:0019901">
    <property type="term" value="F:protein kinase binding"/>
    <property type="evidence" value="ECO:0000353"/>
    <property type="project" value="UniProtKB"/>
</dbReference>
<dbReference type="GO" id="GO:0106310">
    <property type="term" value="F:protein serine kinase activity"/>
    <property type="evidence" value="ECO:0007669"/>
    <property type="project" value="RHEA"/>
</dbReference>
<dbReference type="GO" id="GO:0004674">
    <property type="term" value="F:protein serine/threonine kinase activity"/>
    <property type="evidence" value="ECO:0000318"/>
    <property type="project" value="GO_Central"/>
</dbReference>
<dbReference type="GO" id="GO:0000917">
    <property type="term" value="P:division septum assembly"/>
    <property type="evidence" value="ECO:0007669"/>
    <property type="project" value="UniProtKB-KW"/>
</dbReference>
<dbReference type="GO" id="GO:0008360">
    <property type="term" value="P:regulation of cell shape"/>
    <property type="evidence" value="ECO:0007669"/>
    <property type="project" value="UniProtKB-KW"/>
</dbReference>
<dbReference type="GO" id="GO:0007165">
    <property type="term" value="P:signal transduction"/>
    <property type="evidence" value="ECO:0000315"/>
    <property type="project" value="UniProtKB"/>
</dbReference>
<dbReference type="CDD" id="cd06577">
    <property type="entry name" value="PASTA_pknB"/>
    <property type="match status" value="3"/>
</dbReference>
<dbReference type="CDD" id="cd14014">
    <property type="entry name" value="STKc_PknB_like"/>
    <property type="match status" value="1"/>
</dbReference>
<dbReference type="FunFam" id="1.10.510.10:FF:000021">
    <property type="entry name" value="Serine/threonine protein kinase"/>
    <property type="match status" value="1"/>
</dbReference>
<dbReference type="FunFam" id="3.30.200.20:FF:000035">
    <property type="entry name" value="Serine/threonine protein kinase Stk1"/>
    <property type="match status" value="1"/>
</dbReference>
<dbReference type="Gene3D" id="3.30.10.20">
    <property type="match status" value="4"/>
</dbReference>
<dbReference type="Gene3D" id="3.30.200.20">
    <property type="entry name" value="Phosphorylase Kinase, domain 1"/>
    <property type="match status" value="1"/>
</dbReference>
<dbReference type="Gene3D" id="1.10.510.10">
    <property type="entry name" value="Transferase(Phosphotransferase) domain 1"/>
    <property type="match status" value="1"/>
</dbReference>
<dbReference type="InterPro" id="IPR011009">
    <property type="entry name" value="Kinase-like_dom_sf"/>
</dbReference>
<dbReference type="InterPro" id="IPR005543">
    <property type="entry name" value="PASTA_dom"/>
</dbReference>
<dbReference type="InterPro" id="IPR000719">
    <property type="entry name" value="Prot_kinase_dom"/>
</dbReference>
<dbReference type="InterPro" id="IPR017441">
    <property type="entry name" value="Protein_kinase_ATP_BS"/>
</dbReference>
<dbReference type="InterPro" id="IPR008271">
    <property type="entry name" value="Ser/Thr_kinase_AS"/>
</dbReference>
<dbReference type="NCBIfam" id="NF033483">
    <property type="entry name" value="PknB_PASTA_kin"/>
    <property type="match status" value="1"/>
</dbReference>
<dbReference type="PANTHER" id="PTHR43289">
    <property type="entry name" value="MITOGEN-ACTIVATED PROTEIN KINASE KINASE KINASE 20-RELATED"/>
    <property type="match status" value="1"/>
</dbReference>
<dbReference type="PANTHER" id="PTHR43289:SF34">
    <property type="entry name" value="SERINE_THREONINE-PROTEIN KINASE YBDM-RELATED"/>
    <property type="match status" value="1"/>
</dbReference>
<dbReference type="Pfam" id="PF03793">
    <property type="entry name" value="PASTA"/>
    <property type="match status" value="4"/>
</dbReference>
<dbReference type="Pfam" id="PF00069">
    <property type="entry name" value="Pkinase"/>
    <property type="match status" value="1"/>
</dbReference>
<dbReference type="SMART" id="SM00740">
    <property type="entry name" value="PASTA"/>
    <property type="match status" value="4"/>
</dbReference>
<dbReference type="SMART" id="SM00220">
    <property type="entry name" value="S_TKc"/>
    <property type="match status" value="1"/>
</dbReference>
<dbReference type="SUPFAM" id="SSF56112">
    <property type="entry name" value="Protein kinase-like (PK-like)"/>
    <property type="match status" value="1"/>
</dbReference>
<dbReference type="PROSITE" id="PS51178">
    <property type="entry name" value="PASTA"/>
    <property type="match status" value="4"/>
</dbReference>
<dbReference type="PROSITE" id="PS00107">
    <property type="entry name" value="PROTEIN_KINASE_ATP"/>
    <property type="match status" value="1"/>
</dbReference>
<dbReference type="PROSITE" id="PS50011">
    <property type="entry name" value="PROTEIN_KINASE_DOM"/>
    <property type="match status" value="1"/>
</dbReference>
<dbReference type="PROSITE" id="PS00108">
    <property type="entry name" value="PROTEIN_KINASE_ST"/>
    <property type="match status" value="1"/>
</dbReference>
<keyword id="KW-0002">3D-structure</keyword>
<keyword id="KW-0067">ATP-binding</keyword>
<keyword id="KW-0131">Cell cycle</keyword>
<keyword id="KW-0132">Cell division</keyword>
<keyword id="KW-1003">Cell membrane</keyword>
<keyword id="KW-0133">Cell shape</keyword>
<keyword id="KW-0418">Kinase</keyword>
<keyword id="KW-0472">Membrane</keyword>
<keyword id="KW-0547">Nucleotide-binding</keyword>
<keyword id="KW-0597">Phosphoprotein</keyword>
<keyword id="KW-1185">Reference proteome</keyword>
<keyword id="KW-0677">Repeat</keyword>
<keyword id="KW-0717">Septation</keyword>
<keyword id="KW-0723">Serine/threonine-protein kinase</keyword>
<keyword id="KW-0808">Transferase</keyword>
<keyword id="KW-0812">Transmembrane</keyword>
<keyword id="KW-1133">Transmembrane helix</keyword>
<accession>Q8DNS0</accession>
<protein>
    <recommendedName>
        <fullName>Serine/threonine-protein kinase StkP</fullName>
        <shortName>Ser/Thr-protein kinase StkP</shortName>
        <ecNumber>2.7.11.1</ecNumber>
    </recommendedName>
    <alternativeName>
        <fullName>Eukaryotic-type Ser/Thr protein kinase</fullName>
        <shortName>ESTPK</shortName>
    </alternativeName>
</protein>
<sequence length="659" mass="72293">MIQIGKIFAGRYRIVKQIGRGGMADVYLAKDLILDGEEVAVKVLRTNYQTDPIAVARFQREARAMADLDHPHIVRITDIGEEDGQQYLAMEYVAGLDLKRYIKEHYPLSNEEAVRIMGQILLAMRLAHTRGIVHRDLKPQNILLTPDGTAKVTDFGIAVAFAETSLTQTNSMLGSVHYLSPEQARGSKATVQSDIYAMGIIFYEMLTGHIPYDGDSAVTIALQHFQNPLPSVIAENSSVPQALENVIIKATAKKLTNRYRSVSEMYVDLSSSLSYNRRNESKLIFDETSKADTKTLPKVSQSTLTSIPKVQAQTEHKSIKNPSQAVTEETYQPQAPKKHRFKMRYLILLASLVLVAASLIWILSRTPATIAIPDVAGQTVAEAKATLKKANFEIGEEKTEASEKVEEGRIIRTDPGAGTGRKEGTKINLVVSSGKQSFQISNYVGRKSSDVIAELKEKKVPDNLIKIEEEESNESEAGTVLKQSLPEGTTYDLSKATQIVLTVAKKATTIQLGNYIGRNSTEVISELKQKKVPENLIKIEEEESSESEPGTIMKQSPGAGTTYDVSKPTQIVLTVAKKVTSVAMPSYIGSSLEFTKNNLIQIVGIKEANIEVVEVTTAPAGSVEGMVVEQSPRAGEKVDLNKTRVKISIYKPKTTSATP</sequence>
<evidence type="ECO:0000250" key="1"/>
<evidence type="ECO:0000255" key="2">
    <source>
        <dbReference type="PROSITE-ProRule" id="PRU00159"/>
    </source>
</evidence>
<evidence type="ECO:0000255" key="3">
    <source>
        <dbReference type="PROSITE-ProRule" id="PRU00528"/>
    </source>
</evidence>
<evidence type="ECO:0000255" key="4">
    <source>
        <dbReference type="PROSITE-ProRule" id="PRU10027"/>
    </source>
</evidence>
<evidence type="ECO:0000256" key="5">
    <source>
        <dbReference type="SAM" id="MobiDB-lite"/>
    </source>
</evidence>
<evidence type="ECO:0000269" key="6">
    <source>
    </source>
</evidence>
<evidence type="ECO:0000269" key="7">
    <source>
    </source>
</evidence>
<evidence type="ECO:0000269" key="8">
    <source>
    </source>
</evidence>
<evidence type="ECO:0000269" key="9">
    <source>
    </source>
</evidence>
<evidence type="ECO:0000303" key="10">
    <source>
    </source>
</evidence>
<evidence type="ECO:0007829" key="11">
    <source>
        <dbReference type="PDB" id="5NOD"/>
    </source>
</evidence>
<gene>
    <name type="primary">stkP</name>
    <name type="synonym">pkn2</name>
    <name type="ordered locus">spr1577</name>
</gene>
<feature type="chain" id="PRO_0000418146" description="Serine/threonine-protein kinase StkP">
    <location>
        <begin position="1"/>
        <end position="659"/>
    </location>
</feature>
<feature type="topological domain" description="Cytoplasmic" evidence="1">
    <location>
        <begin position="1"/>
        <end position="342"/>
    </location>
</feature>
<feature type="transmembrane region" description="Helical" evidence="1">
    <location>
        <begin position="343"/>
        <end position="363"/>
    </location>
</feature>
<feature type="topological domain" description="Extracellular" evidence="1">
    <location>
        <begin position="364"/>
        <end position="659"/>
    </location>
</feature>
<feature type="domain" description="Protein kinase" evidence="2">
    <location>
        <begin position="12"/>
        <end position="273"/>
    </location>
</feature>
<feature type="domain" description="PASTA 1" evidence="3">
    <location>
        <begin position="366"/>
        <end position="433"/>
    </location>
</feature>
<feature type="domain" description="PASTA 2" evidence="3">
    <location>
        <begin position="434"/>
        <end position="505"/>
    </location>
</feature>
<feature type="domain" description="PASTA 3" evidence="3">
    <location>
        <begin position="506"/>
        <end position="577"/>
    </location>
</feature>
<feature type="domain" description="PASTA 4" evidence="3">
    <location>
        <begin position="578"/>
        <end position="651"/>
    </location>
</feature>
<feature type="region of interest" description="Disordered" evidence="5">
    <location>
        <begin position="541"/>
        <end position="561"/>
    </location>
</feature>
<feature type="active site" description="Proton acceptor" evidence="2 4">
    <location>
        <position position="136"/>
    </location>
</feature>
<feature type="binding site" evidence="2">
    <location>
        <begin position="18"/>
        <end position="26"/>
    </location>
    <ligand>
        <name>ATP</name>
        <dbReference type="ChEBI" id="CHEBI:30616"/>
    </ligand>
</feature>
<feature type="binding site" evidence="2">
    <location>
        <position position="42"/>
    </location>
    <ligand>
        <name>ATP</name>
        <dbReference type="ChEBI" id="CHEBI:30616"/>
    </ligand>
</feature>
<feature type="mutagenesis site" description="Cells form very elongated and unchained cells. They have a giant length size and show the aberrant presence of multiple septa that do not seem functional. StkP is properly recruited to each non-constricted septum site. No phosphorylation activity. Slight reduction in transcription of the peptidoglycan hydrolase pcsB gene, but less than effect of deletion mutant." evidence="6 7 8 9">
    <original>K</original>
    <variation>M</variation>
    <location>
        <position position="42"/>
    </location>
</feature>
<feature type="strand" evidence="11">
    <location>
        <begin position="581"/>
        <end position="583"/>
    </location>
</feature>
<feature type="helix" evidence="11">
    <location>
        <begin position="592"/>
        <end position="601"/>
    </location>
</feature>
<feature type="helix" evidence="11">
    <location>
        <begin position="607"/>
        <end position="609"/>
    </location>
</feature>
<feature type="strand" evidence="11">
    <location>
        <begin position="610"/>
        <end position="616"/>
    </location>
</feature>
<feature type="strand" evidence="11">
    <location>
        <begin position="626"/>
        <end position="632"/>
    </location>
</feature>
<feature type="strand" evidence="11">
    <location>
        <begin position="636"/>
        <end position="639"/>
    </location>
</feature>
<feature type="turn" evidence="11">
    <location>
        <begin position="640"/>
        <end position="642"/>
    </location>
</feature>
<feature type="strand" evidence="11">
    <location>
        <begin position="645"/>
        <end position="650"/>
    </location>
</feature>
<comment type="function">
    <text evidence="6 7 9">Protein kinase involved in signal transduction pathways that regulate various cellular processes. Likely senses intracellular peptidoglycan subunits present in the cell division septa of actively growing cells; thus, intracellular unlinked peptidoglycan may serve as the signal molecules that trigger StkP phosphorylation activity on a set of substrates. Plays a crucial role in the regulation of cell shape and cell division of S.pneumoniae through control of at least DivIVA activity. Identified target substrates that are specifically phosphorylated by StkP in vivo, mainly on threonine residues, are DivIVA, KhpB (also called EloR/Jag) and StkP itself. Autophosphorylated StkP is a substrate for the cotranscribed protein phosphatase PhpP (shown in the avirulent strain Rx / Cp1015); PhpP and StkP appear to constitute a functional signaling couple in vivo.</text>
</comment>
<comment type="catalytic activity">
    <reaction evidence="6">
        <text>L-seryl-[protein] + ATP = O-phospho-L-seryl-[protein] + ADP + H(+)</text>
        <dbReference type="Rhea" id="RHEA:17989"/>
        <dbReference type="Rhea" id="RHEA-COMP:9863"/>
        <dbReference type="Rhea" id="RHEA-COMP:11604"/>
        <dbReference type="ChEBI" id="CHEBI:15378"/>
        <dbReference type="ChEBI" id="CHEBI:29999"/>
        <dbReference type="ChEBI" id="CHEBI:30616"/>
        <dbReference type="ChEBI" id="CHEBI:83421"/>
        <dbReference type="ChEBI" id="CHEBI:456216"/>
        <dbReference type="EC" id="2.7.11.1"/>
    </reaction>
</comment>
<comment type="catalytic activity">
    <reaction evidence="6">
        <text>L-threonyl-[protein] + ATP = O-phospho-L-threonyl-[protein] + ADP + H(+)</text>
        <dbReference type="Rhea" id="RHEA:46608"/>
        <dbReference type="Rhea" id="RHEA-COMP:11060"/>
        <dbReference type="Rhea" id="RHEA-COMP:11605"/>
        <dbReference type="ChEBI" id="CHEBI:15378"/>
        <dbReference type="ChEBI" id="CHEBI:30013"/>
        <dbReference type="ChEBI" id="CHEBI:30616"/>
        <dbReference type="ChEBI" id="CHEBI:61977"/>
        <dbReference type="ChEBI" id="CHEBI:456216"/>
        <dbReference type="EC" id="2.7.11.1"/>
    </reaction>
</comment>
<comment type="subunit">
    <text evidence="1 9 10">Homodimer. StkP forms dimers through its transmembrane and extracellular domains. Dimer formation likely promotes autophosphorylation activity and might be necessary for targeting StkP substrate (By similarity). Interacts with MreC in the elongasome (PubMed:28710862). May interact with sensor histidine kinase WalK, thereby playing a role in signal transduction by WalK.</text>
</comment>
<comment type="subcellular location">
    <subcellularLocation>
        <location evidence="6 7 9">Cell membrane</location>
        <topology evidence="6 7">Single-pass membrane protein</topology>
    </subcellularLocation>
    <text>The kinase domain is located intracellularly, while the C-terminal PASTA domain is exposed extracellularly. Localizes to the midcell division sites. Time-lapse microscopy shows that StkP displays an intermediate timing of recruitment to midcell: StkP arrives shortly after FtsA but before DivIVA. Furthermore, StkP remains at midcell longer than FtsA, until division is complete. Delocalizes from the septum in the presence of antibiotics that target the latest stages of cell-wall biosynthesis and in cells that have stopped dividing.</text>
</comment>
<comment type="domain">
    <text evidence="6 9">Consists of an N-terminal kinase domain, a transmembrane domain, and a C-terminal domain containing four repeats of the PASTA signature sequence (Penicillin-binding protein and Ser/Thr protein kinase associated domain). The PASTA domain binds to peptidoglycan (PGN) subunits (shown in strain Rx / Cp1015), is essential for StkP activation and substrate phosphorylation, and is required for cellular targeting to midcell.</text>
</comment>
<comment type="PTM">
    <text evidence="1">Autophosphorylation occurs predominantly at the threonine residue and weakly at the serine residue. Dephosphorylated by PhpP (By similarity).</text>
</comment>
<comment type="disruption phenotype">
    <text evidence="6 7 8">According to PubMed:22211696, cells lacking this gene show round shape (the cell shape of wild-type strain is ovoid) and form long chains with unsplit cross-wall joining cells. Their septa either are not positioned at the equator, or display an aberrant ultrastructure (curly aspects). They display delocalized sites of peptidoglycan synthesis. According to PubMed:22431591, cells in which StkP is depleted clearly show an elongated phenotype, with cell-wall synthesis occurring along the peripheral side between the septal zones. Reduces transcription of the peptidoglycan hydrolase pcsB gene (PubMed:27902439).</text>
</comment>
<comment type="similarity">
    <text evidence="2">Belongs to the protein kinase superfamily. Ser/Thr protein kinase family.</text>
</comment>
<name>STKP_STRR6</name>
<organism>
    <name type="scientific">Streptococcus pneumoniae (strain ATCC BAA-255 / R6)</name>
    <dbReference type="NCBI Taxonomy" id="171101"/>
    <lineage>
        <taxon>Bacteria</taxon>
        <taxon>Bacillati</taxon>
        <taxon>Bacillota</taxon>
        <taxon>Bacilli</taxon>
        <taxon>Lactobacillales</taxon>
        <taxon>Streptococcaceae</taxon>
        <taxon>Streptococcus</taxon>
    </lineage>
</organism>